<organism>
    <name type="scientific">Viverra megaspila</name>
    <name type="common">Large-spotted civet</name>
    <dbReference type="NCBI Taxonomy" id="205656"/>
    <lineage>
        <taxon>Eukaryota</taxon>
        <taxon>Metazoa</taxon>
        <taxon>Chordata</taxon>
        <taxon>Craniata</taxon>
        <taxon>Vertebrata</taxon>
        <taxon>Euteleostomi</taxon>
        <taxon>Mammalia</taxon>
        <taxon>Eutheria</taxon>
        <taxon>Laurasiatheria</taxon>
        <taxon>Carnivora</taxon>
        <taxon>Feliformia</taxon>
        <taxon>Viverridae</taxon>
        <taxon>Viverrinae</taxon>
        <taxon>Viverra</taxon>
    </lineage>
</organism>
<dbReference type="EMBL" id="AF511046">
    <property type="protein sequence ID" value="AAQ08022.1"/>
    <property type="molecule type" value="Genomic_DNA"/>
</dbReference>
<dbReference type="SMR" id="Q71FI9"/>
<dbReference type="GO" id="GO:0005743">
    <property type="term" value="C:mitochondrial inner membrane"/>
    <property type="evidence" value="ECO:0007669"/>
    <property type="project" value="UniProtKB-SubCell"/>
</dbReference>
<dbReference type="GO" id="GO:0045275">
    <property type="term" value="C:respiratory chain complex III"/>
    <property type="evidence" value="ECO:0007669"/>
    <property type="project" value="InterPro"/>
</dbReference>
<dbReference type="GO" id="GO:0046872">
    <property type="term" value="F:metal ion binding"/>
    <property type="evidence" value="ECO:0007669"/>
    <property type="project" value="UniProtKB-KW"/>
</dbReference>
<dbReference type="GO" id="GO:0008121">
    <property type="term" value="F:ubiquinol-cytochrome-c reductase activity"/>
    <property type="evidence" value="ECO:0007669"/>
    <property type="project" value="InterPro"/>
</dbReference>
<dbReference type="GO" id="GO:0006122">
    <property type="term" value="P:mitochondrial electron transport, ubiquinol to cytochrome c"/>
    <property type="evidence" value="ECO:0007669"/>
    <property type="project" value="TreeGrafter"/>
</dbReference>
<dbReference type="CDD" id="cd00290">
    <property type="entry name" value="cytochrome_b_C"/>
    <property type="match status" value="1"/>
</dbReference>
<dbReference type="CDD" id="cd00284">
    <property type="entry name" value="Cytochrome_b_N"/>
    <property type="match status" value="1"/>
</dbReference>
<dbReference type="FunFam" id="1.20.810.10:FF:000002">
    <property type="entry name" value="Cytochrome b"/>
    <property type="match status" value="1"/>
</dbReference>
<dbReference type="Gene3D" id="1.20.810.10">
    <property type="entry name" value="Cytochrome Bc1 Complex, Chain C"/>
    <property type="match status" value="1"/>
</dbReference>
<dbReference type="InterPro" id="IPR005798">
    <property type="entry name" value="Cyt_b/b6_C"/>
</dbReference>
<dbReference type="InterPro" id="IPR036150">
    <property type="entry name" value="Cyt_b/b6_C_sf"/>
</dbReference>
<dbReference type="InterPro" id="IPR005797">
    <property type="entry name" value="Cyt_b/b6_N"/>
</dbReference>
<dbReference type="InterPro" id="IPR027387">
    <property type="entry name" value="Cytb/b6-like_sf"/>
</dbReference>
<dbReference type="InterPro" id="IPR030689">
    <property type="entry name" value="Cytochrome_b"/>
</dbReference>
<dbReference type="InterPro" id="IPR048260">
    <property type="entry name" value="Cytochrome_b_C_euk/bac"/>
</dbReference>
<dbReference type="InterPro" id="IPR048259">
    <property type="entry name" value="Cytochrome_b_N_euk/bac"/>
</dbReference>
<dbReference type="InterPro" id="IPR016174">
    <property type="entry name" value="Di-haem_cyt_TM"/>
</dbReference>
<dbReference type="PANTHER" id="PTHR19271">
    <property type="entry name" value="CYTOCHROME B"/>
    <property type="match status" value="1"/>
</dbReference>
<dbReference type="PANTHER" id="PTHR19271:SF16">
    <property type="entry name" value="CYTOCHROME B"/>
    <property type="match status" value="1"/>
</dbReference>
<dbReference type="Pfam" id="PF00032">
    <property type="entry name" value="Cytochrom_B_C"/>
    <property type="match status" value="1"/>
</dbReference>
<dbReference type="Pfam" id="PF00033">
    <property type="entry name" value="Cytochrome_B"/>
    <property type="match status" value="1"/>
</dbReference>
<dbReference type="PIRSF" id="PIRSF038885">
    <property type="entry name" value="COB"/>
    <property type="match status" value="1"/>
</dbReference>
<dbReference type="SUPFAM" id="SSF81648">
    <property type="entry name" value="a domain/subunit of cytochrome bc1 complex (Ubiquinol-cytochrome c reductase)"/>
    <property type="match status" value="1"/>
</dbReference>
<dbReference type="SUPFAM" id="SSF81342">
    <property type="entry name" value="Transmembrane di-heme cytochromes"/>
    <property type="match status" value="1"/>
</dbReference>
<dbReference type="PROSITE" id="PS51003">
    <property type="entry name" value="CYTB_CTER"/>
    <property type="match status" value="1"/>
</dbReference>
<dbReference type="PROSITE" id="PS51002">
    <property type="entry name" value="CYTB_NTER"/>
    <property type="match status" value="1"/>
</dbReference>
<gene>
    <name type="primary">MT-CYB</name>
    <name type="synonym">COB</name>
    <name type="synonym">CYTB</name>
    <name type="synonym">MTCYB</name>
</gene>
<name>CYB_VIVME</name>
<proteinExistence type="inferred from homology"/>
<evidence type="ECO:0000250" key="1"/>
<evidence type="ECO:0000250" key="2">
    <source>
        <dbReference type="UniProtKB" id="P00157"/>
    </source>
</evidence>
<evidence type="ECO:0000255" key="3">
    <source>
        <dbReference type="PROSITE-ProRule" id="PRU00967"/>
    </source>
</evidence>
<evidence type="ECO:0000255" key="4">
    <source>
        <dbReference type="PROSITE-ProRule" id="PRU00968"/>
    </source>
</evidence>
<sequence>MTNIRKSHPLAKMINKSFIDLPAPSNISAWWNFGSLLGVCLILQILTGLFLAMHYTADTTTAFSSVTHICRDVNYGWIIRYMHANGASMFFICLFMHVGRGMYYGSYTFSETWNIGILLLFTVMATAFMGYVLPWGQMSFWGATVITNLLSAIPYIGTNLVEWIWGGFSVDKATLTRFFAFHFILPFIISALAAVHLLFLHETGSNNPSGVVSDSDKIPFHPYYTIKDILGLLLLILTLMLLVLFSPDLLGDPDNYTPANPLNTPPHIKPEWYFLFAYAILRSIPNKLGGVLALILSILILAIIPLLHTSKQRSMMFRPLSQCLFWLLVADLLTLTWIGGQPVEHPFITIGQLASIFYFSILLILMPIFSTIENHLLKW</sequence>
<keyword id="KW-0249">Electron transport</keyword>
<keyword id="KW-0349">Heme</keyword>
<keyword id="KW-0408">Iron</keyword>
<keyword id="KW-0472">Membrane</keyword>
<keyword id="KW-0479">Metal-binding</keyword>
<keyword id="KW-0496">Mitochondrion</keyword>
<keyword id="KW-0999">Mitochondrion inner membrane</keyword>
<keyword id="KW-0679">Respiratory chain</keyword>
<keyword id="KW-0812">Transmembrane</keyword>
<keyword id="KW-1133">Transmembrane helix</keyword>
<keyword id="KW-0813">Transport</keyword>
<keyword id="KW-0830">Ubiquinone</keyword>
<geneLocation type="mitochondrion"/>
<protein>
    <recommendedName>
        <fullName>Cytochrome b</fullName>
    </recommendedName>
    <alternativeName>
        <fullName>Complex III subunit 3</fullName>
    </alternativeName>
    <alternativeName>
        <fullName>Complex III subunit III</fullName>
    </alternativeName>
    <alternativeName>
        <fullName>Cytochrome b-c1 complex subunit 3</fullName>
    </alternativeName>
    <alternativeName>
        <fullName>Ubiquinol-cytochrome-c reductase complex cytochrome b subunit</fullName>
    </alternativeName>
</protein>
<feature type="chain" id="PRO_0000247425" description="Cytochrome b">
    <location>
        <begin position="1"/>
        <end position="379"/>
    </location>
</feature>
<feature type="transmembrane region" description="Helical" evidence="2">
    <location>
        <begin position="33"/>
        <end position="53"/>
    </location>
</feature>
<feature type="transmembrane region" description="Helical" evidence="2">
    <location>
        <begin position="77"/>
        <end position="98"/>
    </location>
</feature>
<feature type="transmembrane region" description="Helical" evidence="2">
    <location>
        <begin position="113"/>
        <end position="133"/>
    </location>
</feature>
<feature type="transmembrane region" description="Helical" evidence="2">
    <location>
        <begin position="178"/>
        <end position="198"/>
    </location>
</feature>
<feature type="transmembrane region" description="Helical" evidence="2">
    <location>
        <begin position="226"/>
        <end position="246"/>
    </location>
</feature>
<feature type="transmembrane region" description="Helical" evidence="2">
    <location>
        <begin position="288"/>
        <end position="308"/>
    </location>
</feature>
<feature type="transmembrane region" description="Helical" evidence="2">
    <location>
        <begin position="320"/>
        <end position="340"/>
    </location>
</feature>
<feature type="transmembrane region" description="Helical" evidence="2">
    <location>
        <begin position="347"/>
        <end position="367"/>
    </location>
</feature>
<feature type="binding site" description="axial binding residue" evidence="2">
    <location>
        <position position="83"/>
    </location>
    <ligand>
        <name>heme b</name>
        <dbReference type="ChEBI" id="CHEBI:60344"/>
        <label>b562</label>
    </ligand>
    <ligandPart>
        <name>Fe</name>
        <dbReference type="ChEBI" id="CHEBI:18248"/>
    </ligandPart>
</feature>
<feature type="binding site" description="axial binding residue" evidence="2">
    <location>
        <position position="97"/>
    </location>
    <ligand>
        <name>heme b</name>
        <dbReference type="ChEBI" id="CHEBI:60344"/>
        <label>b566</label>
    </ligand>
    <ligandPart>
        <name>Fe</name>
        <dbReference type="ChEBI" id="CHEBI:18248"/>
    </ligandPart>
</feature>
<feature type="binding site" description="axial binding residue" evidence="2">
    <location>
        <position position="182"/>
    </location>
    <ligand>
        <name>heme b</name>
        <dbReference type="ChEBI" id="CHEBI:60344"/>
        <label>b562</label>
    </ligand>
    <ligandPart>
        <name>Fe</name>
        <dbReference type="ChEBI" id="CHEBI:18248"/>
    </ligandPart>
</feature>
<feature type="binding site" description="axial binding residue" evidence="2">
    <location>
        <position position="196"/>
    </location>
    <ligand>
        <name>heme b</name>
        <dbReference type="ChEBI" id="CHEBI:60344"/>
        <label>b566</label>
    </ligand>
    <ligandPart>
        <name>Fe</name>
        <dbReference type="ChEBI" id="CHEBI:18248"/>
    </ligandPart>
</feature>
<feature type="binding site" evidence="2">
    <location>
        <position position="201"/>
    </location>
    <ligand>
        <name>a ubiquinone</name>
        <dbReference type="ChEBI" id="CHEBI:16389"/>
    </ligand>
</feature>
<reference key="1">
    <citation type="journal article" date="2004" name="Zool. Scr.">
        <title>First molecular evidence for reassessing phylogenetic affinities between genets (Genetta) and the enigmatic genet-like taxa Osbornictis, Poiana and Prionodon (Carnivora, Viverridae).</title>
        <authorList>
            <person name="Gaubert P."/>
            <person name="Tranier M."/>
            <person name="Delmas A.-S."/>
            <person name="Colyn M."/>
            <person name="Veron G."/>
        </authorList>
    </citation>
    <scope>NUCLEOTIDE SEQUENCE [GENOMIC DNA]</scope>
</reference>
<comment type="function">
    <text evidence="2">Component of the ubiquinol-cytochrome c reductase complex (complex III or cytochrome b-c1 complex) that is part of the mitochondrial respiratory chain. The b-c1 complex mediates electron transfer from ubiquinol to cytochrome c. Contributes to the generation of a proton gradient across the mitochondrial membrane that is then used for ATP synthesis.</text>
</comment>
<comment type="cofactor">
    <cofactor evidence="2">
        <name>heme b</name>
        <dbReference type="ChEBI" id="CHEBI:60344"/>
    </cofactor>
    <text evidence="2">Binds 2 heme b groups non-covalently.</text>
</comment>
<comment type="subunit">
    <text evidence="2">The cytochrome bc1 complex contains 11 subunits: 3 respiratory subunits (MT-CYB, CYC1 and UQCRFS1), 2 core proteins (UQCRC1 and UQCRC2) and 6 low-molecular weight proteins (UQCRH/QCR6, UQCRB/QCR7, UQCRQ/QCR8, UQCR10/QCR9, UQCR11/QCR10 and a cleavage product of UQCRFS1). This cytochrome bc1 complex then forms a dimer.</text>
</comment>
<comment type="subcellular location">
    <subcellularLocation>
        <location evidence="2">Mitochondrion inner membrane</location>
        <topology evidence="2">Multi-pass membrane protein</topology>
    </subcellularLocation>
</comment>
<comment type="miscellaneous">
    <text evidence="1">Heme 1 (or BL or b562) is low-potential and absorbs at about 562 nm, and heme 2 (or BH or b566) is high-potential and absorbs at about 566 nm.</text>
</comment>
<comment type="similarity">
    <text evidence="3 4">Belongs to the cytochrome b family.</text>
</comment>
<comment type="caution">
    <text evidence="2">The full-length protein contains only eight transmembrane helices, not nine as predicted by bioinformatics tools.</text>
</comment>
<accession>Q71FI9</accession>